<accession>P0CAV8</accession>
<accession>O05190</accession>
<dbReference type="EMBL" id="AE005673">
    <property type="protein sequence ID" value="AAK25714.1"/>
    <property type="status" value="ALT_INIT"/>
    <property type="molecule type" value="Genomic_DNA"/>
</dbReference>
<dbReference type="PIR" id="F87714">
    <property type="entry name" value="F87714"/>
</dbReference>
<dbReference type="RefSeq" id="NP_422546.1">
    <property type="nucleotide sequence ID" value="NC_002696.2"/>
</dbReference>
<dbReference type="RefSeq" id="WP_024266006.1">
    <property type="nucleotide sequence ID" value="NC_002696.2"/>
</dbReference>
<dbReference type="SMR" id="P0CAV8"/>
<dbReference type="IntAct" id="P0CAV8">
    <property type="interactions" value="1"/>
</dbReference>
<dbReference type="STRING" id="190650.CC_3752"/>
<dbReference type="EnsemblBacteria" id="AAK25714">
    <property type="protein sequence ID" value="AAK25714"/>
    <property type="gene ID" value="CC_3752"/>
</dbReference>
<dbReference type="KEGG" id="ccr:CC_3752"/>
<dbReference type="PATRIC" id="fig|190650.5.peg.3754"/>
<dbReference type="eggNOG" id="COG1475">
    <property type="taxonomic scope" value="Bacteria"/>
</dbReference>
<dbReference type="HOGENOM" id="CLU_023853_0_0_5"/>
<dbReference type="BioCyc" id="CAULO:CC3752-MONOMER"/>
<dbReference type="Proteomes" id="UP000001816">
    <property type="component" value="Chromosome"/>
</dbReference>
<dbReference type="GO" id="GO:0005694">
    <property type="term" value="C:chromosome"/>
    <property type="evidence" value="ECO:0007669"/>
    <property type="project" value="TreeGrafter"/>
</dbReference>
<dbReference type="GO" id="GO:0003677">
    <property type="term" value="F:DNA binding"/>
    <property type="evidence" value="ECO:0007669"/>
    <property type="project" value="UniProtKB-KW"/>
</dbReference>
<dbReference type="GO" id="GO:0007059">
    <property type="term" value="P:chromosome segregation"/>
    <property type="evidence" value="ECO:0007669"/>
    <property type="project" value="UniProtKB-KW"/>
</dbReference>
<dbReference type="GO" id="GO:0045881">
    <property type="term" value="P:positive regulation of sporulation resulting in formation of a cellular spore"/>
    <property type="evidence" value="ECO:0007669"/>
    <property type="project" value="TreeGrafter"/>
</dbReference>
<dbReference type="CDD" id="cd16393">
    <property type="entry name" value="SPO0J_N"/>
    <property type="match status" value="1"/>
</dbReference>
<dbReference type="FunFam" id="1.10.10.2830:FF:000001">
    <property type="entry name" value="Chromosome partitioning protein ParB"/>
    <property type="match status" value="1"/>
</dbReference>
<dbReference type="FunFam" id="3.90.1530.30:FF:000001">
    <property type="entry name" value="Chromosome partitioning protein ParB"/>
    <property type="match status" value="1"/>
</dbReference>
<dbReference type="Gene3D" id="1.10.10.2830">
    <property type="match status" value="1"/>
</dbReference>
<dbReference type="Gene3D" id="3.90.1530.30">
    <property type="match status" value="1"/>
</dbReference>
<dbReference type="InterPro" id="IPR050336">
    <property type="entry name" value="Chromosome_partition/occlusion"/>
</dbReference>
<dbReference type="InterPro" id="IPR041468">
    <property type="entry name" value="HTH_ParB/Spo0J"/>
</dbReference>
<dbReference type="InterPro" id="IPR004437">
    <property type="entry name" value="ParB/RepB/Spo0J"/>
</dbReference>
<dbReference type="InterPro" id="IPR003115">
    <property type="entry name" value="ParB/Sulfiredoxin_dom"/>
</dbReference>
<dbReference type="InterPro" id="IPR036086">
    <property type="entry name" value="ParB/Sulfiredoxin_sf"/>
</dbReference>
<dbReference type="InterPro" id="IPR057240">
    <property type="entry name" value="ParB_dimer_C"/>
</dbReference>
<dbReference type="NCBIfam" id="TIGR00180">
    <property type="entry name" value="parB_part"/>
    <property type="match status" value="1"/>
</dbReference>
<dbReference type="PANTHER" id="PTHR33375">
    <property type="entry name" value="CHROMOSOME-PARTITIONING PROTEIN PARB-RELATED"/>
    <property type="match status" value="1"/>
</dbReference>
<dbReference type="PANTHER" id="PTHR33375:SF1">
    <property type="entry name" value="CHROMOSOME-PARTITIONING PROTEIN PARB-RELATED"/>
    <property type="match status" value="1"/>
</dbReference>
<dbReference type="Pfam" id="PF17762">
    <property type="entry name" value="HTH_ParB"/>
    <property type="match status" value="1"/>
</dbReference>
<dbReference type="Pfam" id="PF23552">
    <property type="entry name" value="ParB_dimer"/>
    <property type="match status" value="1"/>
</dbReference>
<dbReference type="Pfam" id="PF02195">
    <property type="entry name" value="ParBc"/>
    <property type="match status" value="1"/>
</dbReference>
<dbReference type="SMART" id="SM00470">
    <property type="entry name" value="ParB"/>
    <property type="match status" value="1"/>
</dbReference>
<dbReference type="SUPFAM" id="SSF109709">
    <property type="entry name" value="KorB DNA-binding domain-like"/>
    <property type="match status" value="1"/>
</dbReference>
<dbReference type="SUPFAM" id="SSF110849">
    <property type="entry name" value="ParB/Sulfiredoxin"/>
    <property type="match status" value="1"/>
</dbReference>
<sequence length="304" mass="32809">MESVVVGEPGMSEGRRGLGRGLSALLGEVDAAPAQAPGEQLGGSREAPIEILQRNPDQPRRTFREEDLEDLSNSIREKGVLQPILVRPSPDTAGEYQIVAGERRWRAAQRAGLKTVPIMVRELDDLAVLEIGIIENVQRADLNVLEEALSYKVLMEKFERTQENIAQTIGKSRSHVANTMRLLALPDEVQSYLVSGELTAGHARAIAAAADPVALAKQIIEGGLSVRETEALARKAPNLSAGKSKGGRPPRVKDTDTQALESDLSSVLGLDVSIDHRGSTGTLTITYATLEQLDDLCNRLTRGI</sequence>
<proteinExistence type="evidence at protein level"/>
<reference key="1">
    <citation type="journal article" date="2001" name="Proc. Natl. Acad. Sci. U.S.A.">
        <title>Complete genome sequence of Caulobacter crescentus.</title>
        <authorList>
            <person name="Nierman W.C."/>
            <person name="Feldblyum T.V."/>
            <person name="Laub M.T."/>
            <person name="Paulsen I.T."/>
            <person name="Nelson K.E."/>
            <person name="Eisen J.A."/>
            <person name="Heidelberg J.F."/>
            <person name="Alley M.R.K."/>
            <person name="Ohta N."/>
            <person name="Maddock J.R."/>
            <person name="Potocka I."/>
            <person name="Nelson W.C."/>
            <person name="Newton A."/>
            <person name="Stephens C."/>
            <person name="Phadke N.D."/>
            <person name="Ely B."/>
            <person name="DeBoy R.T."/>
            <person name="Dodson R.J."/>
            <person name="Durkin A.S."/>
            <person name="Gwinn M.L."/>
            <person name="Haft D.H."/>
            <person name="Kolonay J.F."/>
            <person name="Smit J."/>
            <person name="Craven M.B."/>
            <person name="Khouri H.M."/>
            <person name="Shetty J."/>
            <person name="Berry K.J."/>
            <person name="Utterback T.R."/>
            <person name="Tran K."/>
            <person name="Wolf A.M."/>
            <person name="Vamathevan J.J."/>
            <person name="Ermolaeva M.D."/>
            <person name="White O."/>
            <person name="Salzberg S.L."/>
            <person name="Venter J.C."/>
            <person name="Shapiro L."/>
            <person name="Fraser C.M."/>
        </authorList>
    </citation>
    <scope>NUCLEOTIDE SEQUENCE [LARGE SCALE GENOMIC DNA]</scope>
    <source>
        <strain>ATCC 19089 / CIP 103742 / CB 15</strain>
    </source>
</reference>
<organism>
    <name type="scientific">Caulobacter vibrioides (strain ATCC 19089 / CIP 103742 / CB 15)</name>
    <name type="common">Caulobacter crescentus</name>
    <dbReference type="NCBI Taxonomy" id="190650"/>
    <lineage>
        <taxon>Bacteria</taxon>
        <taxon>Pseudomonadati</taxon>
        <taxon>Pseudomonadota</taxon>
        <taxon>Alphaproteobacteria</taxon>
        <taxon>Caulobacterales</taxon>
        <taxon>Caulobacteraceae</taxon>
        <taxon>Caulobacter</taxon>
    </lineage>
</organism>
<keyword id="KW-0159">Chromosome partition</keyword>
<keyword id="KW-0238">DNA-binding</keyword>
<keyword id="KW-1185">Reference proteome</keyword>
<comment type="function">
    <text>Involved in chromosome partition. Localize to both poles of the predivisional cell following completion of DNA replication. Binds to the DNA origin of replication.</text>
</comment>
<comment type="interaction">
    <interactant intactId="EBI-1998988">
        <id>P0CAV8</id>
    </interactant>
    <interactant intactId="EBI-1998970">
        <id>Q9A8N4</id>
        <label>popZ</label>
    </interactant>
    <organismsDiffer>false</organismsDiffer>
    <experiments>6</experiments>
</comment>
<comment type="similarity">
    <text evidence="2">Belongs to the ParB family.</text>
</comment>
<comment type="sequence caution" evidence="2">
    <conflict type="erroneous initiation">
        <sequence resource="EMBL-CDS" id="AAK25714"/>
    </conflict>
    <text>Truncated N-terminus.</text>
</comment>
<protein>
    <recommendedName>
        <fullName>Chromosome-partitioning protein ParB</fullName>
    </recommendedName>
</protein>
<gene>
    <name type="primary">parB</name>
    <name type="ordered locus">CC_3752</name>
</gene>
<feature type="chain" id="PRO_0000178676" description="Chromosome-partitioning protein ParB">
    <location>
        <begin position="1"/>
        <end position="304"/>
    </location>
</feature>
<feature type="region of interest" description="Disordered" evidence="1">
    <location>
        <begin position="236"/>
        <end position="257"/>
    </location>
</feature>
<name>PARB_CAUVC</name>
<evidence type="ECO:0000256" key="1">
    <source>
        <dbReference type="SAM" id="MobiDB-lite"/>
    </source>
</evidence>
<evidence type="ECO:0000305" key="2"/>